<accession>O15554</accession>
<accession>Q53XR4</accession>
<feature type="chain" id="PRO_0000155017" description="Intermediate conductance calcium-activated potassium channel protein 4">
    <location>
        <begin position="1"/>
        <end position="427"/>
    </location>
</feature>
<feature type="transmembrane region" description="Helical; Name=Segment S1" evidence="2">
    <location>
        <begin position="29"/>
        <end position="49"/>
    </location>
</feature>
<feature type="transmembrane region" description="Helical; Name=Segment S2" evidence="2">
    <location>
        <begin position="59"/>
        <end position="79"/>
    </location>
</feature>
<feature type="transmembrane region" description="Helical; Name=Segment S3" evidence="2">
    <location>
        <begin position="108"/>
        <end position="128"/>
    </location>
</feature>
<feature type="transmembrane region" description="Helical; Name=Segment S4" evidence="2">
    <location>
        <begin position="143"/>
        <end position="163"/>
    </location>
</feature>
<feature type="transmembrane region" description="Helical; Name=Segment S5" evidence="2">
    <location>
        <begin position="207"/>
        <end position="227"/>
    </location>
</feature>
<feature type="intramembrane region" description="Pore-forming; Name=Segment H5" evidence="2">
    <location>
        <begin position="241"/>
        <end position="261"/>
    </location>
</feature>
<feature type="transmembrane region" description="Helical; Name=Segment S6" evidence="2">
    <location>
        <begin position="265"/>
        <end position="285"/>
    </location>
</feature>
<feature type="region of interest" description="Calmodulin-binding">
    <location>
        <begin position="286"/>
        <end position="347"/>
    </location>
</feature>
<feature type="modified residue" description="Phosphohistidine" evidence="7">
    <location>
        <position position="358"/>
    </location>
</feature>
<feature type="sequence variant" id="VAR_074485" description="In DHS2; dbSNP:rs1057519077." evidence="12">
    <original>V</original>
    <variation>E</variation>
    <location>
        <position position="282"/>
    </location>
</feature>
<feature type="sequence variant" id="VAR_074486" description="In DHS2; dbSNP:rs1057519076." evidence="11 12">
    <original>V</original>
    <variation>M</variation>
    <location>
        <position position="282"/>
    </location>
</feature>
<feature type="sequence variant" id="VAR_074487" description="In DHS2; no effect on plasma membrane localization; increases calcium-activated potassium channel activity; dbSNP:rs774455945." evidence="10 11">
    <original>R</original>
    <variation>H</variation>
    <location>
        <position position="352"/>
    </location>
</feature>
<feature type="mutagenesis site" description="Loss of sensitivity to triarylmethanes." evidence="5">
    <original>T</original>
    <variation>S</variation>
    <location>
        <position position="250"/>
    </location>
</feature>
<feature type="mutagenesis site" description="Loss of sensitivity to triarylmethanes." evidence="5">
    <original>V</original>
    <variation>A</variation>
    <location>
        <position position="275"/>
    </location>
</feature>
<feature type="sequence conflict" description="In Ref. 6; AAK81862." evidence="24" ref="6">
    <original>S</original>
    <variation>G</variation>
    <location>
        <position position="66"/>
    </location>
</feature>
<feature type="helix" evidence="30">
    <location>
        <begin position="12"/>
        <end position="50"/>
    </location>
</feature>
<feature type="turn" evidence="30">
    <location>
        <begin position="51"/>
        <end position="56"/>
    </location>
</feature>
<feature type="helix" evidence="30">
    <location>
        <begin position="57"/>
        <end position="91"/>
    </location>
</feature>
<feature type="helix" evidence="30">
    <location>
        <begin position="96"/>
        <end position="99"/>
    </location>
</feature>
<feature type="helix" evidence="30">
    <location>
        <begin position="104"/>
        <end position="114"/>
    </location>
</feature>
<feature type="helix" evidence="30">
    <location>
        <begin position="149"/>
        <end position="154"/>
    </location>
</feature>
<feature type="helix" evidence="30">
    <location>
        <begin position="155"/>
        <end position="161"/>
    </location>
</feature>
<feature type="helix" evidence="30">
    <location>
        <begin position="162"/>
        <end position="170"/>
    </location>
</feature>
<feature type="turn" evidence="30">
    <location>
        <begin position="172"/>
        <end position="174"/>
    </location>
</feature>
<feature type="helix" evidence="30">
    <location>
        <begin position="177"/>
        <end position="186"/>
    </location>
</feature>
<feature type="helix" evidence="30">
    <location>
        <begin position="192"/>
        <end position="202"/>
    </location>
</feature>
<feature type="helix" evidence="30">
    <location>
        <begin position="204"/>
        <end position="226"/>
    </location>
</feature>
<feature type="turn" evidence="30">
    <location>
        <begin position="230"/>
        <end position="233"/>
    </location>
</feature>
<feature type="helix" evidence="30">
    <location>
        <begin position="237"/>
        <end position="248"/>
    </location>
</feature>
<feature type="strand" evidence="31">
    <location>
        <begin position="254"/>
        <end position="256"/>
    </location>
</feature>
<feature type="helix" evidence="30">
    <location>
        <begin position="261"/>
        <end position="287"/>
    </location>
</feature>
<feature type="helix" evidence="30">
    <location>
        <begin position="293"/>
        <end position="330"/>
    </location>
</feature>
<feature type="turn" evidence="30">
    <location>
        <begin position="335"/>
        <end position="337"/>
    </location>
</feature>
<feature type="helix" evidence="30">
    <location>
        <begin position="338"/>
        <end position="368"/>
    </location>
</feature>
<feature type="helix" evidence="32">
    <location>
        <begin position="378"/>
        <end position="413"/>
    </location>
</feature>
<sequence length="427" mass="47696">MGGDLVLGLGALRRRKRLLEQEKSLAGWALVLAGTGIGLMVLHAEMLWFGGCSWALYLFLVKCTISISTFLLLCLIVAFHAKEVQLFMTDNGLRDWRVALTGRQAAQIVLELVVCGLHPAPVRGPPCVQDLGAPLTSPQPWPGFLGQGEALLSLAMLLRLYLVPRAVLLRSGVLLNASYRSIGALNQVRFRHWFVAKLYMNTHPGRLLLGLTLGLWLTTAWVLSVAERQAVNATGHLSDTLWLIPITFLTIGYGDVVPGTMWGKIVCLCTGVMGVCCTALLVAVVARKLEFNKAEKHVHNFMMDIQYTKEMKESAARVLQEAWMFYKHTRRKESHAARRHQRKLLAAINAFRQVRLKHRKLREQVNSMVDISKMHMILYDLQQNLSSSHRALEKQIDTLAGKLDALTELLSTALGPRQLPEPSQQSK</sequence>
<organism>
    <name type="scientific">Homo sapiens</name>
    <name type="common">Human</name>
    <dbReference type="NCBI Taxonomy" id="9606"/>
    <lineage>
        <taxon>Eukaryota</taxon>
        <taxon>Metazoa</taxon>
        <taxon>Chordata</taxon>
        <taxon>Craniata</taxon>
        <taxon>Vertebrata</taxon>
        <taxon>Euteleostomi</taxon>
        <taxon>Mammalia</taxon>
        <taxon>Eutheria</taxon>
        <taxon>Euarchontoglires</taxon>
        <taxon>Primates</taxon>
        <taxon>Haplorrhini</taxon>
        <taxon>Catarrhini</taxon>
        <taxon>Hominidae</taxon>
        <taxon>Homo</taxon>
    </lineage>
</organism>
<comment type="function">
    <text evidence="1 3 4 5 6 7 8 9 10 13 16 17 18">Intermediate conductance calcium-activated potassium channel that mediates the voltage-independent transmembrane transfer of potassium across the cell membrane through a constitutive interaction with calmodulin which binds the intracellular calcium allowing its opening (PubMed:10026195, PubMed:10961988, PubMed:11425865, PubMed:15831468, PubMed:17157250, PubMed:18796614, PubMed:26148990, PubMed:9326665, PubMed:9380751, PubMed:9407042). The current is characterized by a voltage-independent activation, an intracellular calcium concentration increase-dependent activation and a single-channel conductance of about 25 picosiemens (PubMed:9326665, PubMed:9380751, PubMed:9407042). Also presents an inwardly rectifying current, thus reducing its already small outward conductance of potassium ions, which is particularly the case when the membrane potential displays positive values, above + 20 mV (PubMed:9326665, PubMed:9380751, PubMed:9407042). Controls calcium influx during vascular contractility by being responsible of membrane hyperpolarization induced by vasoactive factors in proliferative vascular smooth muscle cell types (By similarity). Following calcium influx, the consecutive activation of KCNN4 channel leads to a hyperpolarization of the cell membrane potential and hence an increase of the electrical driving force for further calcium influx promoting sustained calcium entry in response to stimulation with chemotactic peptides (PubMed:26418693). Required for maximal calcium influx and proliferation during the reactivation of naive T-cells (PubMed:17157250, PubMed:18796614). Plays a role in the late stages of EGF-induced macropinocytosis through activation by PI(3)P (PubMed:24591580).</text>
</comment>
<comment type="catalytic activity">
    <reaction evidence="3 4 5 6 7 8 10 16 17 18">
        <text>K(+)(in) = K(+)(out)</text>
        <dbReference type="Rhea" id="RHEA:29463"/>
        <dbReference type="ChEBI" id="CHEBI:29103"/>
    </reaction>
</comment>
<comment type="activity regulation">
    <text evidence="4 5 7 8 16 18">The channel is inhibited by clotrimazole and charybdotoxin but is insensitive to apamin.</text>
</comment>
<comment type="subunit">
    <text evidence="3 6 14 15">Homodimer (PubMed:29953543). Homotetramer (PubMed:29724949). Heterotetramer of potassium channel proteins (Probable). Interacts with MTMR6; this interaction leads to selective dephosphorylation of PI(3)P in a lipid microdomain adjacent to KCNN4, resulting in a decrease of intermediate conductance calcium-activated potassium channel activity (PubMed:15831468). Interacts (via the C-tail domain) with CALM1; the calmodulin binding is constitutive, does not require calcium and mediates calcium-dependent gating and four calmodulin molecules bind to one channel tetramer (PubMed:10026195).</text>
</comment>
<comment type="interaction">
    <interactant intactId="EBI-2924473">
        <id>O15554</id>
    </interactant>
    <interactant intactId="EBI-700794">
        <id>Q13323</id>
        <label>BIK</label>
    </interactant>
    <organismsDiffer>false</organismsDiffer>
    <experiments>3</experiments>
</comment>
<comment type="interaction">
    <interactant intactId="EBI-2924473">
        <id>O15554</id>
    </interactant>
    <interactant intactId="EBI-397435">
        <id>P62158</id>
        <label>CALM3</label>
    </interactant>
    <organismsDiffer>false</organismsDiffer>
    <experiments>2</experiments>
</comment>
<comment type="interaction">
    <interactant intactId="EBI-2924473">
        <id>O15554</id>
    </interactant>
    <interactant intactId="EBI-349854">
        <id>P13569</id>
        <label>CFTR</label>
    </interactant>
    <organismsDiffer>false</organismsDiffer>
    <experiments>5</experiments>
</comment>
<comment type="interaction">
    <interactant intactId="EBI-2924473">
        <id>O15554</id>
    </interactant>
    <interactant intactId="EBI-12208021">
        <id>Q8TBE1</id>
        <label>CNIH3</label>
    </interactant>
    <organismsDiffer>false</organismsDiffer>
    <experiments>3</experiments>
</comment>
<comment type="interaction">
    <interactant intactId="EBI-2924473">
        <id>O15554</id>
    </interactant>
    <interactant intactId="EBI-12175685">
        <id>Q14802-3</id>
        <label>FXYD3</label>
    </interactant>
    <organismsDiffer>false</organismsDiffer>
    <experiments>3</experiments>
</comment>
<comment type="interaction">
    <interactant intactId="EBI-2924473">
        <id>O15554</id>
    </interactant>
    <interactant intactId="EBI-13345167">
        <id>Q8TDT2</id>
        <label>GPR152</label>
    </interactant>
    <organismsDiffer>false</organismsDiffer>
    <experiments>3</experiments>
</comment>
<comment type="interaction">
    <interactant intactId="EBI-2924473">
        <id>O15554</id>
    </interactant>
    <interactant intactId="EBI-740955">
        <id>Q9NRX4</id>
        <label>PHPT1</label>
    </interactant>
    <organismsDiffer>false</organismsDiffer>
    <experiments>2</experiments>
</comment>
<comment type="interaction">
    <interactant intactId="EBI-2924473">
        <id>O15554</id>
    </interactant>
    <interactant intactId="EBI-2845982">
        <id>Q01453</id>
        <label>PMP22</label>
    </interactant>
    <organismsDiffer>false</organismsDiffer>
    <experiments>3</experiments>
</comment>
<comment type="interaction">
    <interactant intactId="EBI-2924473">
        <id>O15554</id>
    </interactant>
    <interactant intactId="EBI-8644112">
        <id>Q9BRI3</id>
        <label>SLC30A2</label>
    </interactant>
    <organismsDiffer>false</organismsDiffer>
    <experiments>3</experiments>
</comment>
<comment type="interaction">
    <interactant intactId="EBI-2924473">
        <id>O15554</id>
    </interactant>
    <interactant intactId="EBI-9071709">
        <id>P61266</id>
        <label>STX1B</label>
    </interactant>
    <organismsDiffer>false</organismsDiffer>
    <experiments>3</experiments>
</comment>
<comment type="subcellular location">
    <subcellularLocation>
        <location evidence="6 9 10">Cell membrane</location>
        <topology evidence="2">Multi-pass membrane protein</topology>
    </subcellularLocation>
    <subcellularLocation>
        <location evidence="9">Cell projection</location>
        <location evidence="9">Ruffle membrane</location>
    </subcellularLocation>
    <text evidence="9">Targeted to membrane ruffles after EGF stimulation.</text>
</comment>
<comment type="tissue specificity">
    <text evidence="17">Widely expressed in non-excitable tissues.</text>
</comment>
<comment type="induction">
    <text evidence="4">Up-regulated by phorbol myristate acetate (PMA) and phytohemagglutinin (PHA) in T-cells.</text>
</comment>
<comment type="domain">
    <text evidence="14">Transmembrane helices S5 and S6 form the ion channel pore, which is surrounded bymembrane embedded helices S1 to S4 (PubMed:29724949). The S4-S5 linker, which contains two distinct helices, undergoes conformational changes upon calmodulin binding to open the channel pore (PubMed:29724949).</text>
</comment>
<comment type="PTM">
    <text evidence="7 8">Phosphorylation at His-358 by NDKB activates the intermediate conductance calcium-activated potassium channel activity, and conversely it's dephosphorylation by PHPT1 inhibits this activity.</text>
</comment>
<comment type="disease" evidence="10 11 12">
    <disease id="DI-04597">
        <name>Dehydrated hereditary stomatocytosis 2</name>
        <acronym>DHS2</acronym>
        <description>An autosomal dominant hemolytic anemia characterized by primary erythrocyte dehydration. Erythrocytes exhibit decreased total cation and potassium content that are not accompanied by a proportional net gain of sodium and water. Affected individuals typically manifest mild to moderate compensated hemolytic anemia, with an increased erythrocyte mean corpuscular hemoglobin concentration and a decreased osmotic fragility, both of which reflect cellular dehydration. Their red cells exhibit a panel of various shape abnormalities such as elliptocytes, hemighosts, schizocytes, and very rare stomatocytic cells. Complications such as splenomegaly and cholelithiasis, resulting from increased red cell trapping in the spleen and elevated bilirubin levels, respectively, may occur.</description>
        <dbReference type="MIM" id="616689"/>
    </disease>
    <text>The disease is caused by variants affecting the gene represented in this entry.</text>
</comment>
<comment type="similarity">
    <text evidence="24">Belongs to the potassium channel KCNN family. KCa3.1/KCNN4 subfamily.</text>
</comment>
<protein>
    <recommendedName>
        <fullName evidence="24">Intermediate conductance calcium-activated potassium channel protein 4</fullName>
        <shortName>SKCa 4</shortName>
        <shortName>SKCa4</shortName>
        <shortName evidence="22">hSK4</shortName>
    </recommendedName>
    <alternativeName>
        <fullName evidence="19">Gardos channel</fullName>
    </alternativeName>
    <alternativeName>
        <fullName>IKCa1</fullName>
        <shortName evidence="21">hIK1</shortName>
    </alternativeName>
    <alternativeName>
        <fullName evidence="20">KCa3.1</fullName>
    </alternativeName>
    <alternativeName>
        <fullName>Putative Gardos channel</fullName>
    </alternativeName>
    <alternativeName>
        <fullName evidence="23">hKCa4</fullName>
    </alternativeName>
</protein>
<keyword id="KW-0002">3D-structure</keyword>
<keyword id="KW-0112">Calmodulin-binding</keyword>
<keyword id="KW-1003">Cell membrane</keyword>
<keyword id="KW-0966">Cell projection</keyword>
<keyword id="KW-0225">Disease variant</keyword>
<keyword id="KW-0360">Hereditary hemolytic anemia</keyword>
<keyword id="KW-0391">Immunity</keyword>
<keyword id="KW-0407">Ion channel</keyword>
<keyword id="KW-0406">Ion transport</keyword>
<keyword id="KW-0472">Membrane</keyword>
<keyword id="KW-0597">Phosphoprotein</keyword>
<keyword id="KW-1267">Proteomics identification</keyword>
<keyword id="KW-1185">Reference proteome</keyword>
<keyword id="KW-0812">Transmembrane</keyword>
<keyword id="KW-1133">Transmembrane helix</keyword>
<keyword id="KW-0813">Transport</keyword>
<gene>
    <name evidence="25" type="primary">KCNN4</name>
    <name type="synonym">IK1</name>
    <name type="synonym">IKCA1</name>
    <name type="synonym">KCA4</name>
    <name type="synonym">SK4</name>
</gene>
<reference key="1">
    <citation type="journal article" date="1997" name="Proc. Natl. Acad. Sci. U.S.A.">
        <title>hSK4, a member of a novel subfamily of calcium-activated potassium channels.</title>
        <authorList>
            <person name="Joiner W.J."/>
            <person name="Wang L.-Y."/>
            <person name="Tang M.D."/>
            <person name="Kaczmarek L.K."/>
        </authorList>
    </citation>
    <scope>NUCLEOTIDE SEQUENCE [MRNA]</scope>
    <scope>FUNCTION</scope>
    <scope>TRANSPORTER ACTIVITY</scope>
    <scope>TISSUE SPECIFICITY</scope>
    <source>
        <tissue>Placenta</tissue>
    </source>
</reference>
<reference key="2">
    <citation type="journal article" date="1997" name="Proc. Natl. Acad. Sci. U.S.A.">
        <title>A human intermediate conductance calcium-activated potassium channel.</title>
        <authorList>
            <person name="Ishii T.M."/>
            <person name="Silvia C."/>
            <person name="Hirschberg B."/>
            <person name="Bond C.T."/>
            <person name="Adelman J.P."/>
            <person name="Maylie J."/>
        </authorList>
    </citation>
    <scope>NUCLEOTIDE SEQUENCE [MRNA]</scope>
    <scope>FUNCTION</scope>
    <scope>TRANSPORTER ACTIVITY</scope>
    <scope>ACTIVITY REGULATION</scope>
    <source>
        <tissue>Pancreas</tissue>
    </source>
</reference>
<reference key="3">
    <citation type="journal article" date="1997" name="J. Biol. Chem.">
        <title>A novel gene, hKCa4, encodes the calcium-activated potassium channel in human T lymphocytes.</title>
        <authorList>
            <person name="Logsdon N.J."/>
            <person name="Kang J."/>
            <person name="Togo J.A."/>
            <person name="Christian E.P."/>
            <person name="Aiyar J."/>
        </authorList>
    </citation>
    <scope>NUCLEOTIDE SEQUENCE [MRNA]</scope>
    <scope>FUNCTION</scope>
    <scope>TRANSPORTER ACTIVITY</scope>
    <scope>ACTIVITY REGULATION</scope>
    <source>
        <tissue>Lymph node</tissue>
    </source>
</reference>
<reference key="4">
    <citation type="journal article" date="1998" name="Genomics">
        <title>Human calcium-activated potassium channel gene KCNN4 maps to chromosome 19q13.2 in the region deleted in diamond-blackfan anemia.</title>
        <authorList>
            <person name="Ghanshani S."/>
            <person name="Coleman M."/>
            <person name="Gustavsson P."/>
            <person name="Wu A.C."/>
            <person name="Gargus J.J."/>
            <person name="Gutman G.A."/>
            <person name="Dahl N."/>
            <person name="Mohrenweiser H."/>
            <person name="Chandy K.G."/>
        </authorList>
    </citation>
    <scope>NUCLEOTIDE SEQUENCE [MRNA]</scope>
</reference>
<reference key="5">
    <citation type="journal article" date="2000" name="J. Biol. Chem.">
        <title>Up-regulation of the IKCa1 potassium channel during T-cell activation. Molecular mechanism and functional consequences.</title>
        <authorList>
            <person name="Ghanshani S."/>
            <person name="Wulff H."/>
            <person name="Miller M.J."/>
            <person name="Rohm H."/>
            <person name="Neben A."/>
            <person name="Gutman G.A."/>
            <person name="Cahalan M.D."/>
            <person name="Chandy K.G."/>
        </authorList>
    </citation>
    <scope>NUCLEOTIDE SEQUENCE [GENOMIC DNA]</scope>
    <scope>FUNCTION</scope>
    <scope>TRANSPORTER ACTIVITY</scope>
    <scope>ACTIVITY REGULATION</scope>
    <scope>INDUCTION</scope>
</reference>
<reference key="6">
    <citation type="submission" date="2001-06" db="EMBL/GenBank/DDBJ databases">
        <title>Characterization of calcium-activated potassium channels in human myometrium.</title>
        <authorList>
            <person name="Mazzone J.N."/>
            <person name="Kaiser R.A."/>
            <person name="Buxton I.L.O."/>
        </authorList>
    </citation>
    <scope>NUCLEOTIDE SEQUENCE [MRNA]</scope>
    <source>
        <tissue>Myometrium</tissue>
    </source>
</reference>
<reference key="7">
    <citation type="submission" date="2003-05" db="EMBL/GenBank/DDBJ databases">
        <title>Cloning of human full-length CDSs in BD Creator(TM) system donor vector.</title>
        <authorList>
            <person name="Kalnine N."/>
            <person name="Chen X."/>
            <person name="Rolfs A."/>
            <person name="Halleck A."/>
            <person name="Hines L."/>
            <person name="Eisenstein S."/>
            <person name="Koundinya M."/>
            <person name="Raphael J."/>
            <person name="Moreira D."/>
            <person name="Kelley T."/>
            <person name="LaBaer J."/>
            <person name="Lin Y."/>
            <person name="Phelan M."/>
            <person name="Farmer A."/>
        </authorList>
    </citation>
    <scope>NUCLEOTIDE SEQUENCE [LARGE SCALE MRNA]</scope>
</reference>
<reference key="8">
    <citation type="submission" date="2005-07" db="EMBL/GenBank/DDBJ databases">
        <authorList>
            <person name="Mural R.J."/>
            <person name="Istrail S."/>
            <person name="Sutton G.G."/>
            <person name="Florea L."/>
            <person name="Halpern A.L."/>
            <person name="Mobarry C.M."/>
            <person name="Lippert R."/>
            <person name="Walenz B."/>
            <person name="Shatkay H."/>
            <person name="Dew I."/>
            <person name="Miller J.R."/>
            <person name="Flanigan M.J."/>
            <person name="Edwards N.J."/>
            <person name="Bolanos R."/>
            <person name="Fasulo D."/>
            <person name="Halldorsson B.V."/>
            <person name="Hannenhalli S."/>
            <person name="Turner R."/>
            <person name="Yooseph S."/>
            <person name="Lu F."/>
            <person name="Nusskern D.R."/>
            <person name="Shue B.C."/>
            <person name="Zheng X.H."/>
            <person name="Zhong F."/>
            <person name="Delcher A.L."/>
            <person name="Huson D.H."/>
            <person name="Kravitz S.A."/>
            <person name="Mouchard L."/>
            <person name="Reinert K."/>
            <person name="Remington K.A."/>
            <person name="Clark A.G."/>
            <person name="Waterman M.S."/>
            <person name="Eichler E.E."/>
            <person name="Adams M.D."/>
            <person name="Hunkapiller M.W."/>
            <person name="Myers E.W."/>
            <person name="Venter J.C."/>
        </authorList>
    </citation>
    <scope>NUCLEOTIDE SEQUENCE [LARGE SCALE GENOMIC DNA]</scope>
</reference>
<reference key="9">
    <citation type="journal article" date="2004" name="Genome Res.">
        <title>The status, quality, and expansion of the NIH full-length cDNA project: the Mammalian Gene Collection (MGC).</title>
        <authorList>
            <consortium name="The MGC Project Team"/>
        </authorList>
    </citation>
    <scope>NUCLEOTIDE SEQUENCE [LARGE SCALE MRNA]</scope>
    <source>
        <tissue>Prostate</tissue>
    </source>
</reference>
<reference key="10">
    <citation type="submission" date="1998-03" db="EMBL/GenBank/DDBJ databases">
        <title>hIK1 (putative Gardos channel) PCR product amplified from the K562 human erythroleukemic cell line.</title>
        <authorList>
            <person name="Golding S."/>
            <person name="Culliford S.J."/>
            <person name="Ellory J.C."/>
        </authorList>
    </citation>
    <scope>NUCLEOTIDE SEQUENCE [MRNA] OF 227-367</scope>
</reference>
<reference key="11">
    <citation type="journal article" date="1999" name="J. Biol. Chem.">
        <title>Calmodulin mediates calcium-dependent activation of the intermediate conductance KCa channel, IKCa1.</title>
        <authorList>
            <person name="Fanger C.M."/>
            <person name="Ghanshani S."/>
            <person name="Logsdon N.J."/>
            <person name="Rauer H."/>
            <person name="Kalman K."/>
            <person name="Zhou J."/>
            <person name="Beckingham K."/>
            <person name="Chandy K.G."/>
            <person name="Cahalan M.D."/>
            <person name="Aiyar J."/>
        </authorList>
    </citation>
    <scope>FUNCTION</scope>
    <scope>TRANSPORTER ACTIVITY</scope>
    <scope>INTERACTION WITH CALMODULIN</scope>
</reference>
<reference key="12">
    <citation type="journal article" date="2001" name="J. Biol. Chem.">
        <title>Delineation of the clotrimazole/TRAM-34 binding site on the intermediate conductance calcium-activated potassium channel, IKCa1.</title>
        <authorList>
            <person name="Wulff H."/>
            <person name="Gutman G.A."/>
            <person name="Cahalan M.D."/>
            <person name="Chandy K.G."/>
        </authorList>
    </citation>
    <scope>FUNCTION</scope>
    <scope>TRANSPORTER ACTIVITY</scope>
    <scope>ACTIVITY REGULATION</scope>
    <scope>MUTAGENESIS OF THR-250 AND VAL-275</scope>
</reference>
<reference key="13">
    <citation type="journal article" date="2005" name="Mol. Cell. Biol.">
        <title>The phosphatidylinositol 3-phosphate phosphatase myotubularin-related protein 6 (MTMR6) is a negative regulator of the Ca2+-activated K+ channel KCa3.1.</title>
        <authorList>
            <person name="Srivastava S."/>
            <person name="Li Z."/>
            <person name="Lin L."/>
            <person name="Liu G."/>
            <person name="Ko K."/>
            <person name="Coetzee W.A."/>
            <person name="Skolnik E.Y."/>
        </authorList>
    </citation>
    <scope>FUNCTION</scope>
    <scope>TRANSPORTER ACTIVITY</scope>
    <scope>INTERACTION WITH MTMR6</scope>
    <scope>SUBCELLULAR LOCATION</scope>
</reference>
<reference key="14">
    <citation type="journal article" date="2006" name="Mol. Cell">
        <title>Histidine phosphorylation of the potassium channel KCa3.1 by nucleoside diphosphate kinase B is required for activation of KCa3.1 and CD4 T cells.</title>
        <authorList>
            <person name="Srivastava S."/>
            <person name="Li Z."/>
            <person name="Ko K."/>
            <person name="Choudhury P."/>
            <person name="Albaqumi M."/>
            <person name="Johnson A.K."/>
            <person name="Yan Y."/>
            <person name="Backer J.M."/>
            <person name="Unutmaz D."/>
            <person name="Coetzee W.A."/>
            <person name="Skolnik E.Y."/>
        </authorList>
    </citation>
    <scope>FUNCTION</scope>
    <scope>TRANSPORTER ACTIVITY</scope>
    <scope>ACTIVITY REGULATION</scope>
    <scope>PHOSPHORYLATION AT HIS-358</scope>
</reference>
<reference key="15">
    <citation type="journal article" date="2008" name="Proc. Natl. Acad. Sci. U.S.A.">
        <title>Protein histidine phosphatase 1 negatively regulates CD4 T cells by inhibiting the K+ channel KCa3.1.</title>
        <authorList>
            <person name="Srivastava S."/>
            <person name="Zhdanova O."/>
            <person name="Di L."/>
            <person name="Li Z."/>
            <person name="Albaqumi M."/>
            <person name="Wulff H."/>
            <person name="Skolnik E.Y."/>
        </authorList>
    </citation>
    <scope>FUNCTION</scope>
    <scope>TRANSPORTER ACTIVITY</scope>
    <scope>ACTIVITY REGULATION</scope>
    <scope>DEPHOSPHORYLATION BY PTHP1</scope>
</reference>
<reference key="16">
    <citation type="journal article" date="2012" name="Proc. Natl. Acad. Sci. U.S.A.">
        <title>N-terminal acetylome analyses and functional insights of the N-terminal acetyltransferase NatB.</title>
        <authorList>
            <person name="Van Damme P."/>
            <person name="Lasa M."/>
            <person name="Polevoda B."/>
            <person name="Gazquez C."/>
            <person name="Elosegui-Artola A."/>
            <person name="Kim D.S."/>
            <person name="De Juan-Pardo E."/>
            <person name="Demeyer K."/>
            <person name="Hole K."/>
            <person name="Larrea E."/>
            <person name="Timmerman E."/>
            <person name="Prieto J."/>
            <person name="Arnesen T."/>
            <person name="Sherman F."/>
            <person name="Gevaert K."/>
            <person name="Aldabe R."/>
        </authorList>
    </citation>
    <scope>IDENTIFICATION BY MASS SPECTROMETRY [LARGE SCALE ANALYSIS]</scope>
</reference>
<reference key="17">
    <citation type="journal article" date="2014" name="Proc. Natl. Acad. Sci. U.S.A.">
        <title>Sequential breakdown of 3-phosphorylated phosphoinositides is essential for the completion of macropinocytosis.</title>
        <authorList>
            <person name="Maekawa M."/>
            <person name="Terasaka S."/>
            <person name="Mochizuki Y."/>
            <person name="Kawai K."/>
            <person name="Ikeda Y."/>
            <person name="Araki N."/>
            <person name="Skolnik E.Y."/>
            <person name="Taguchi T."/>
            <person name="Arai H."/>
        </authorList>
    </citation>
    <scope>FUNCTION</scope>
    <scope>SUBCELLULAR LOCATION</scope>
</reference>
<reference key="18">
    <citation type="journal article" date="2015" name="PLoS ONE">
        <title>KCa3.1-Dependent Hyperpolarization Enhances Intracellular Ca2+ Signaling Induced by fMLF in Differentiated U937 Cells.</title>
        <authorList>
            <person name="Penna A."/>
            <person name="Stutzin A."/>
        </authorList>
    </citation>
    <scope>FUNCTION</scope>
    <scope>TRANSPORTER ACTIVITY</scope>
</reference>
<reference evidence="29" key="19">
    <citation type="journal article" date="2018" name="PLoS ONE">
        <title>Crystal structure of the C-terminal four-helix bundle of the potassium channel KCa3.1.</title>
        <authorList>
            <person name="Ji T."/>
            <person name="Corbalan-Garcia S."/>
            <person name="Hubbard S.R."/>
        </authorList>
    </citation>
    <scope>X-RAY CRYSTALLOGRAPHY (1.75 ANGSTROMS) OF 376-415</scope>
    <scope>SUBUNIT</scope>
</reference>
<reference evidence="26 27 28" key="20">
    <citation type="journal article" date="2018" name="Science">
        <title>Activation mechanism of a human SK-calmodulin channel complex elucidated by cryo-EM structures.</title>
        <authorList>
            <person name="Lee C.H."/>
            <person name="MacKinnon R."/>
        </authorList>
    </citation>
    <scope>STRUCTURE BY ELECTRON MICROSCOPY (3.40 ANGSTROMS) IN COMPLEX WITH CALM1</scope>
    <scope>SUBUNIT</scope>
    <scope>DOMAIN</scope>
</reference>
<reference key="21">
    <citation type="journal article" date="2015" name="Am. J. Hematol.">
        <title>Novel Gardos channel mutations linked to dehydrated hereditary stomatocytosis (xerocytosis).</title>
        <authorList>
            <person name="Andolfo I."/>
            <person name="Russo R."/>
            <person name="Manna F."/>
            <person name="Shmukler B.E."/>
            <person name="Gambale A."/>
            <person name="Vitiello G."/>
            <person name="De Rosa G."/>
            <person name="Brugnara C."/>
            <person name="Alper S.L."/>
            <person name="Snyder L.M."/>
            <person name="Iolascon A."/>
        </authorList>
    </citation>
    <scope>VARIANTS DHS2 MET-282 AND HIS-352</scope>
</reference>
<reference key="22">
    <citation type="journal article" date="2015" name="Blood">
        <title>A mutation in the Gardos channel is associated with hereditary xerocytosis.</title>
        <authorList>
            <person name="Rapetti-Mauss R."/>
            <person name="Lacoste C."/>
            <person name="Picard V."/>
            <person name="Guitton C."/>
            <person name="Lombard E."/>
            <person name="Loosveld M."/>
            <person name="Nivaggioni V."/>
            <person name="Dasilva N."/>
            <person name="Salgado D."/>
            <person name="Desvignes J.P."/>
            <person name="Beroud C."/>
            <person name="Viout P."/>
            <person name="Bernard M."/>
            <person name="Soriani O."/>
            <person name="Vinti H."/>
            <person name="Lacroze V."/>
            <person name="Feneant-Thibault M."/>
            <person name="Thuret I."/>
            <person name="Guizouarn H."/>
            <person name="Badens C."/>
        </authorList>
    </citation>
    <scope>INVOLVEMENT IN DHS2</scope>
    <scope>VARIANT DHS2 HIS-352</scope>
    <scope>SUBCELLULAR LOCATION</scope>
    <scope>FUNCTION</scope>
    <scope>TRANSPORTER ACTIVITY</scope>
</reference>
<reference key="23">
    <citation type="journal article" date="2015" name="Blood">
        <title>Mutations in the Gardos channel (KCNN4) are associated with hereditary xerocytosis.</title>
        <authorList>
            <person name="Glogowska E."/>
            <person name="Lezon-Geyda K."/>
            <person name="Maksimova Y."/>
            <person name="Schulz V.P."/>
            <person name="Gallagher P.G."/>
        </authorList>
    </citation>
    <scope>VARIANTS DHS2 GLU-282 AND MET-282</scope>
</reference>
<name>KCNN4_HUMAN</name>
<evidence type="ECO:0000250" key="1">
    <source>
        <dbReference type="UniProtKB" id="Q9QYW1"/>
    </source>
</evidence>
<evidence type="ECO:0000255" key="2"/>
<evidence type="ECO:0000269" key="3">
    <source>
    </source>
</evidence>
<evidence type="ECO:0000269" key="4">
    <source>
    </source>
</evidence>
<evidence type="ECO:0000269" key="5">
    <source>
    </source>
</evidence>
<evidence type="ECO:0000269" key="6">
    <source>
    </source>
</evidence>
<evidence type="ECO:0000269" key="7">
    <source>
    </source>
</evidence>
<evidence type="ECO:0000269" key="8">
    <source>
    </source>
</evidence>
<evidence type="ECO:0000269" key="9">
    <source>
    </source>
</evidence>
<evidence type="ECO:0000269" key="10">
    <source>
    </source>
</evidence>
<evidence type="ECO:0000269" key="11">
    <source>
    </source>
</evidence>
<evidence type="ECO:0000269" key="12">
    <source>
    </source>
</evidence>
<evidence type="ECO:0000269" key="13">
    <source>
    </source>
</evidence>
<evidence type="ECO:0000269" key="14">
    <source>
    </source>
</evidence>
<evidence type="ECO:0000269" key="15">
    <source>
    </source>
</evidence>
<evidence type="ECO:0000269" key="16">
    <source>
    </source>
</evidence>
<evidence type="ECO:0000269" key="17">
    <source>
    </source>
</evidence>
<evidence type="ECO:0000269" key="18">
    <source>
    </source>
</evidence>
<evidence type="ECO:0000303" key="19">
    <source>
    </source>
</evidence>
<evidence type="ECO:0000303" key="20">
    <source>
    </source>
</evidence>
<evidence type="ECO:0000303" key="21">
    <source>
    </source>
</evidence>
<evidence type="ECO:0000303" key="22">
    <source>
    </source>
</evidence>
<evidence type="ECO:0000303" key="23">
    <source>
    </source>
</evidence>
<evidence type="ECO:0000305" key="24"/>
<evidence type="ECO:0000312" key="25">
    <source>
        <dbReference type="HGNC" id="HGNC:6293"/>
    </source>
</evidence>
<evidence type="ECO:0007744" key="26">
    <source>
        <dbReference type="PDB" id="6CNM"/>
    </source>
</evidence>
<evidence type="ECO:0007744" key="27">
    <source>
        <dbReference type="PDB" id="6CNN"/>
    </source>
</evidence>
<evidence type="ECO:0007744" key="28">
    <source>
        <dbReference type="PDB" id="6CNO"/>
    </source>
</evidence>
<evidence type="ECO:0007744" key="29">
    <source>
        <dbReference type="PDB" id="6D42"/>
    </source>
</evidence>
<evidence type="ECO:0007829" key="30">
    <source>
        <dbReference type="PDB" id="6CNM"/>
    </source>
</evidence>
<evidence type="ECO:0007829" key="31">
    <source>
        <dbReference type="PDB" id="6CNN"/>
    </source>
</evidence>
<evidence type="ECO:0007829" key="32">
    <source>
        <dbReference type="PDB" id="6D42"/>
    </source>
</evidence>
<proteinExistence type="evidence at protein level"/>
<dbReference type="EMBL" id="AF000972">
    <property type="protein sequence ID" value="AAB82739.1"/>
    <property type="molecule type" value="mRNA"/>
</dbReference>
<dbReference type="EMBL" id="AF022150">
    <property type="protein sequence ID" value="AAC23541.1"/>
    <property type="molecule type" value="mRNA"/>
</dbReference>
<dbReference type="EMBL" id="AF022797">
    <property type="protein sequence ID" value="AAC51913.1"/>
    <property type="molecule type" value="mRNA"/>
</dbReference>
<dbReference type="EMBL" id="AF033021">
    <property type="protein sequence ID" value="AAC36804.1"/>
    <property type="molecule type" value="mRNA"/>
</dbReference>
<dbReference type="EMBL" id="AF305735">
    <property type="protein sequence ID" value="AAG26917.1"/>
    <property type="molecule type" value="Genomic_DNA"/>
</dbReference>
<dbReference type="EMBL" id="AF305731">
    <property type="protein sequence ID" value="AAG26917.1"/>
    <property type="status" value="JOINED"/>
    <property type="molecule type" value="Genomic_DNA"/>
</dbReference>
<dbReference type="EMBL" id="AF305732">
    <property type="protein sequence ID" value="AAG26917.1"/>
    <property type="status" value="JOINED"/>
    <property type="molecule type" value="Genomic_DNA"/>
</dbReference>
<dbReference type="EMBL" id="AF305733">
    <property type="protein sequence ID" value="AAG26917.1"/>
    <property type="status" value="JOINED"/>
    <property type="molecule type" value="Genomic_DNA"/>
</dbReference>
<dbReference type="EMBL" id="AF305734">
    <property type="protein sequence ID" value="AAG26917.1"/>
    <property type="status" value="JOINED"/>
    <property type="molecule type" value="Genomic_DNA"/>
</dbReference>
<dbReference type="EMBL" id="AF395661">
    <property type="protein sequence ID" value="AAK81862.1"/>
    <property type="molecule type" value="mRNA"/>
</dbReference>
<dbReference type="EMBL" id="BT007426">
    <property type="protein sequence ID" value="AAP36094.1"/>
    <property type="molecule type" value="mRNA"/>
</dbReference>
<dbReference type="EMBL" id="CH471126">
    <property type="protein sequence ID" value="EAW57230.1"/>
    <property type="molecule type" value="Genomic_DNA"/>
</dbReference>
<dbReference type="EMBL" id="BC015337">
    <property type="protein sequence ID" value="AAH15337.1"/>
    <property type="molecule type" value="mRNA"/>
</dbReference>
<dbReference type="EMBL" id="AF053403">
    <property type="protein sequence ID" value="AAC35281.1"/>
    <property type="molecule type" value="mRNA"/>
</dbReference>
<dbReference type="CCDS" id="CCDS12630.1"/>
<dbReference type="RefSeq" id="NP_002241.1">
    <property type="nucleotide sequence ID" value="NM_002250.3"/>
</dbReference>
<dbReference type="RefSeq" id="XP_054176918.1">
    <property type="nucleotide sequence ID" value="XM_054320943.1"/>
</dbReference>
<dbReference type="RefSeq" id="XP_054176919.1">
    <property type="nucleotide sequence ID" value="XM_054320944.1"/>
</dbReference>
<dbReference type="RefSeq" id="XP_054176920.1">
    <property type="nucleotide sequence ID" value="XM_054320945.1"/>
</dbReference>
<dbReference type="PDB" id="6CNM">
    <property type="method" value="EM"/>
    <property type="resolution" value="3.40 A"/>
    <property type="chains" value="A/B/C/D=1-427"/>
</dbReference>
<dbReference type="PDB" id="6CNN">
    <property type="method" value="EM"/>
    <property type="resolution" value="3.50 A"/>
    <property type="chains" value="A/B/C/D=1-427"/>
</dbReference>
<dbReference type="PDB" id="6CNO">
    <property type="method" value="EM"/>
    <property type="resolution" value="4.70 A"/>
    <property type="chains" value="A/B/C/D=1-427"/>
</dbReference>
<dbReference type="PDB" id="6D42">
    <property type="method" value="X-ray"/>
    <property type="resolution" value="1.75 A"/>
    <property type="chains" value="A/B=376-415"/>
</dbReference>
<dbReference type="PDBsum" id="6CNM"/>
<dbReference type="PDBsum" id="6CNN"/>
<dbReference type="PDBsum" id="6CNO"/>
<dbReference type="PDBsum" id="6D42"/>
<dbReference type="EMDB" id="EMD-7537"/>
<dbReference type="EMDB" id="EMD-7538"/>
<dbReference type="EMDB" id="EMD-7539"/>
<dbReference type="SMR" id="O15554"/>
<dbReference type="BioGRID" id="109984">
    <property type="interactions" value="108"/>
</dbReference>
<dbReference type="DIP" id="DIP-48598N"/>
<dbReference type="FunCoup" id="O15554">
    <property type="interactions" value="143"/>
</dbReference>
<dbReference type="IntAct" id="O15554">
    <property type="interactions" value="56"/>
</dbReference>
<dbReference type="MINT" id="O15554"/>
<dbReference type="STRING" id="9606.ENSP00000496939"/>
<dbReference type="BindingDB" id="O15554"/>
<dbReference type="ChEMBL" id="CHEMBL4305"/>
<dbReference type="DrugBank" id="DB00257">
    <property type="generic name" value="Clotrimazole"/>
</dbReference>
<dbReference type="DrugBank" id="DB02587">
    <property type="generic name" value="Colforsin"/>
</dbReference>
<dbReference type="DrugBank" id="DB01159">
    <property type="generic name" value="Halothane"/>
</dbReference>
<dbReference type="DrugBank" id="DB01110">
    <property type="generic name" value="Miconazole"/>
</dbReference>
<dbReference type="DrugBank" id="DB01054">
    <property type="generic name" value="Nitrendipine"/>
</dbReference>
<dbReference type="DrugBank" id="DB00721">
    <property type="generic name" value="Procaine"/>
</dbReference>
<dbReference type="DrugBank" id="DB00468">
    <property type="generic name" value="Quinine"/>
</dbReference>
<dbReference type="DrugBank" id="DB00867">
    <property type="generic name" value="Ritodrine"/>
</dbReference>
<dbReference type="DrugBank" id="DB06280">
    <property type="generic name" value="Senicapoc"/>
</dbReference>
<dbReference type="DrugBank" id="DB09089">
    <property type="generic name" value="Trimebutine"/>
</dbReference>
<dbReference type="DrugCentral" id="O15554"/>
<dbReference type="GuidetoPHARMACOLOGY" id="384"/>
<dbReference type="TCDB" id="1.A.1.16.2">
    <property type="family name" value="the voltage-gated ion channel (vic) superfamily"/>
</dbReference>
<dbReference type="GlyGen" id="O15554">
    <property type="glycosylation" value="2 sites, 1 O-linked glycan (1 site)"/>
</dbReference>
<dbReference type="iPTMnet" id="O15554"/>
<dbReference type="PhosphoSitePlus" id="O15554"/>
<dbReference type="SwissPalm" id="O15554"/>
<dbReference type="BioMuta" id="KCNN4"/>
<dbReference type="jPOST" id="O15554"/>
<dbReference type="MassIVE" id="O15554"/>
<dbReference type="PaxDb" id="9606-ENSP00000262888"/>
<dbReference type="PeptideAtlas" id="O15554"/>
<dbReference type="ProteomicsDB" id="48757"/>
<dbReference type="Antibodypedia" id="31124">
    <property type="antibodies" value="316 antibodies from 34 providers"/>
</dbReference>
<dbReference type="DNASU" id="3783"/>
<dbReference type="Ensembl" id="ENST00000648319.1">
    <property type="protein sequence ID" value="ENSP00000496939.1"/>
    <property type="gene ID" value="ENSG00000104783.15"/>
</dbReference>
<dbReference type="GeneID" id="3783"/>
<dbReference type="KEGG" id="hsa:3783"/>
<dbReference type="MANE-Select" id="ENST00000648319.1">
    <property type="protein sequence ID" value="ENSP00000496939.1"/>
    <property type="RefSeq nucleotide sequence ID" value="NM_002250.3"/>
    <property type="RefSeq protein sequence ID" value="NP_002241.1"/>
</dbReference>
<dbReference type="UCSC" id="uc002oxl.3">
    <property type="organism name" value="human"/>
</dbReference>
<dbReference type="AGR" id="HGNC:6293"/>
<dbReference type="CTD" id="3783"/>
<dbReference type="DisGeNET" id="3783"/>
<dbReference type="GeneCards" id="KCNN4"/>
<dbReference type="HGNC" id="HGNC:6293">
    <property type="gene designation" value="KCNN4"/>
</dbReference>
<dbReference type="HPA" id="ENSG00000104783">
    <property type="expression patterns" value="Tissue enhanced (salivary)"/>
</dbReference>
<dbReference type="MalaCards" id="KCNN4"/>
<dbReference type="MIM" id="602754">
    <property type="type" value="gene"/>
</dbReference>
<dbReference type="MIM" id="616689">
    <property type="type" value="phenotype"/>
</dbReference>
<dbReference type="neXtProt" id="NX_O15554"/>
<dbReference type="OpenTargets" id="ENSG00000104783"/>
<dbReference type="Orphanet" id="586">
    <property type="disease" value="Cystic fibrosis"/>
</dbReference>
<dbReference type="Orphanet" id="3202">
    <property type="disease" value="Dehydrated hereditary stomatocytosis"/>
</dbReference>
<dbReference type="PharmGKB" id="PA222"/>
<dbReference type="VEuPathDB" id="HostDB:ENSG00000104783"/>
<dbReference type="eggNOG" id="KOG3684">
    <property type="taxonomic scope" value="Eukaryota"/>
</dbReference>
<dbReference type="GeneTree" id="ENSGT00950000182904"/>
<dbReference type="HOGENOM" id="CLU_014617_5_2_1"/>
<dbReference type="InParanoid" id="O15554"/>
<dbReference type="OMA" id="MHMTLSD"/>
<dbReference type="OrthoDB" id="73653at2759"/>
<dbReference type="PAN-GO" id="O15554">
    <property type="GO annotations" value="6 GO annotations based on evolutionary models"/>
</dbReference>
<dbReference type="PhylomeDB" id="O15554"/>
<dbReference type="TreeFam" id="TF315015"/>
<dbReference type="PathwayCommons" id="O15554"/>
<dbReference type="Reactome" id="R-HSA-1296052">
    <property type="pathway name" value="Ca2+ activated K+ channels"/>
</dbReference>
<dbReference type="SignaLink" id="O15554"/>
<dbReference type="SIGNOR" id="O15554"/>
<dbReference type="BioGRID-ORCS" id="3783">
    <property type="hits" value="11 hits in 1164 CRISPR screens"/>
</dbReference>
<dbReference type="ChiTaRS" id="KCNN4">
    <property type="organism name" value="human"/>
</dbReference>
<dbReference type="GeneWiki" id="KCNN4"/>
<dbReference type="GenomeRNAi" id="3783"/>
<dbReference type="Pharos" id="O15554">
    <property type="development level" value="Tchem"/>
</dbReference>
<dbReference type="PRO" id="PR:O15554"/>
<dbReference type="Proteomes" id="UP000005640">
    <property type="component" value="Chromosome 19"/>
</dbReference>
<dbReference type="RNAct" id="O15554">
    <property type="molecule type" value="protein"/>
</dbReference>
<dbReference type="Bgee" id="ENSG00000104783">
    <property type="expression patterns" value="Expressed in olfactory segment of nasal mucosa and 138 other cell types or tissues"/>
</dbReference>
<dbReference type="ExpressionAtlas" id="O15554">
    <property type="expression patterns" value="baseline and differential"/>
</dbReference>
<dbReference type="GO" id="GO:0005829">
    <property type="term" value="C:cytosol"/>
    <property type="evidence" value="ECO:0000314"/>
    <property type="project" value="HPA"/>
</dbReference>
<dbReference type="GO" id="GO:0043005">
    <property type="term" value="C:neuron projection"/>
    <property type="evidence" value="ECO:0000318"/>
    <property type="project" value="GO_Central"/>
</dbReference>
<dbReference type="GO" id="GO:0043025">
    <property type="term" value="C:neuronal cell body"/>
    <property type="evidence" value="ECO:0000318"/>
    <property type="project" value="GO_Central"/>
</dbReference>
<dbReference type="GO" id="GO:0005886">
    <property type="term" value="C:plasma membrane"/>
    <property type="evidence" value="ECO:0000314"/>
    <property type="project" value="UniProtKB"/>
</dbReference>
<dbReference type="GO" id="GO:0032587">
    <property type="term" value="C:ruffle membrane"/>
    <property type="evidence" value="ECO:0000314"/>
    <property type="project" value="UniProtKB"/>
</dbReference>
<dbReference type="GO" id="GO:0031982">
    <property type="term" value="C:vesicle"/>
    <property type="evidence" value="ECO:0000314"/>
    <property type="project" value="BHF-UCL"/>
</dbReference>
<dbReference type="GO" id="GO:0008076">
    <property type="term" value="C:voltage-gated potassium channel complex"/>
    <property type="evidence" value="ECO:0000304"/>
    <property type="project" value="ProtInc"/>
</dbReference>
<dbReference type="GO" id="GO:0015269">
    <property type="term" value="F:calcium-activated potassium channel activity"/>
    <property type="evidence" value="ECO:0000314"/>
    <property type="project" value="UniProtKB"/>
</dbReference>
<dbReference type="GO" id="GO:0005516">
    <property type="term" value="F:calmodulin binding"/>
    <property type="evidence" value="ECO:0000314"/>
    <property type="project" value="UniProtKB"/>
</dbReference>
<dbReference type="GO" id="GO:0022894">
    <property type="term" value="F:intermediate conductance calcium-activated potassium channel activity"/>
    <property type="evidence" value="ECO:0000314"/>
    <property type="project" value="UniProtKB"/>
</dbReference>
<dbReference type="GO" id="GO:0005267">
    <property type="term" value="F:potassium channel activity"/>
    <property type="evidence" value="ECO:0000304"/>
    <property type="project" value="Reactome"/>
</dbReference>
<dbReference type="GO" id="GO:0042803">
    <property type="term" value="F:protein homodimerization activity"/>
    <property type="evidence" value="ECO:0000314"/>
    <property type="project" value="UniProtKB"/>
</dbReference>
<dbReference type="GO" id="GO:0019903">
    <property type="term" value="F:protein phosphatase binding"/>
    <property type="evidence" value="ECO:0000353"/>
    <property type="project" value="BHF-UCL"/>
</dbReference>
<dbReference type="GO" id="GO:0016286">
    <property type="term" value="F:small conductance calcium-activated potassium channel activity"/>
    <property type="evidence" value="ECO:0007669"/>
    <property type="project" value="InterPro"/>
</dbReference>
<dbReference type="GO" id="GO:0006816">
    <property type="term" value="P:calcium ion transport"/>
    <property type="evidence" value="ECO:0000314"/>
    <property type="project" value="BHF-UCL"/>
</dbReference>
<dbReference type="GO" id="GO:0006884">
    <property type="term" value="P:cell volume homeostasis"/>
    <property type="evidence" value="ECO:0007669"/>
    <property type="project" value="Ensembl"/>
</dbReference>
<dbReference type="GO" id="GO:0006952">
    <property type="term" value="P:defense response"/>
    <property type="evidence" value="ECO:0000304"/>
    <property type="project" value="ProtInc"/>
</dbReference>
<dbReference type="GO" id="GO:0051649">
    <property type="term" value="P:establishment of localization in cell"/>
    <property type="evidence" value="ECO:0007669"/>
    <property type="project" value="Ensembl"/>
</dbReference>
<dbReference type="GO" id="GO:0002376">
    <property type="term" value="P:immune system process"/>
    <property type="evidence" value="ECO:0007669"/>
    <property type="project" value="UniProtKB-KW"/>
</dbReference>
<dbReference type="GO" id="GO:0044351">
    <property type="term" value="P:macropinocytosis"/>
    <property type="evidence" value="ECO:0000314"/>
    <property type="project" value="UniProtKB"/>
</dbReference>
<dbReference type="GO" id="GO:0045332">
    <property type="term" value="P:phospholipid translocation"/>
    <property type="evidence" value="ECO:0007669"/>
    <property type="project" value="Ensembl"/>
</dbReference>
<dbReference type="GO" id="GO:1901381">
    <property type="term" value="P:positive regulation of potassium ion transmembrane transport"/>
    <property type="evidence" value="ECO:0000304"/>
    <property type="project" value="Reactome"/>
</dbReference>
<dbReference type="GO" id="GO:0050714">
    <property type="term" value="P:positive regulation of protein secretion"/>
    <property type="evidence" value="ECO:0007669"/>
    <property type="project" value="Ensembl"/>
</dbReference>
<dbReference type="GO" id="GO:0050862">
    <property type="term" value="P:positive regulation of T cell receptor signaling pathway"/>
    <property type="evidence" value="ECO:0000314"/>
    <property type="project" value="BHF-UCL"/>
</dbReference>
<dbReference type="GO" id="GO:0071805">
    <property type="term" value="P:potassium ion transmembrane transport"/>
    <property type="evidence" value="ECO:0000314"/>
    <property type="project" value="UniProtKB"/>
</dbReference>
<dbReference type="GO" id="GO:0006813">
    <property type="term" value="P:potassium ion transport"/>
    <property type="evidence" value="ECO:0000304"/>
    <property type="project" value="ProtInc"/>
</dbReference>
<dbReference type="GO" id="GO:0051289">
    <property type="term" value="P:protein homotetramerization"/>
    <property type="evidence" value="ECO:0000314"/>
    <property type="project" value="UniProtKB"/>
</dbReference>
<dbReference type="GO" id="GO:1905664">
    <property type="term" value="P:regulation of calcium ion import across plasma membrane"/>
    <property type="evidence" value="ECO:0000314"/>
    <property type="project" value="UniProtKB"/>
</dbReference>
<dbReference type="GO" id="GO:0046541">
    <property type="term" value="P:saliva secretion"/>
    <property type="evidence" value="ECO:0007669"/>
    <property type="project" value="Ensembl"/>
</dbReference>
<dbReference type="GO" id="GO:0030322">
    <property type="term" value="P:stabilization of membrane potential"/>
    <property type="evidence" value="ECO:0000314"/>
    <property type="project" value="BHF-UCL"/>
</dbReference>
<dbReference type="FunFam" id="1.10.287.70:FF:000088">
    <property type="entry name" value="Intermediate conductance calcium-activated potassium channel protein 4"/>
    <property type="match status" value="1"/>
</dbReference>
<dbReference type="FunFam" id="1.10.287.70:FF:000160">
    <property type="entry name" value="Potassium calcium-activated channel subfamily N member 4"/>
    <property type="match status" value="1"/>
</dbReference>
<dbReference type="Gene3D" id="1.10.287.70">
    <property type="match status" value="2"/>
</dbReference>
<dbReference type="InterPro" id="IPR004178">
    <property type="entry name" value="CaM-bd_dom"/>
</dbReference>
<dbReference type="InterPro" id="IPR036122">
    <property type="entry name" value="CaM-bd_dom_sf"/>
</dbReference>
<dbReference type="InterPro" id="IPR015449">
    <property type="entry name" value="K_chnl_Ca-activ_SK"/>
</dbReference>
<dbReference type="InterPro" id="IPR013099">
    <property type="entry name" value="K_chnl_dom"/>
</dbReference>
<dbReference type="PANTHER" id="PTHR10153">
    <property type="entry name" value="SMALL CONDUCTANCE CALCIUM-ACTIVATED POTASSIUM CHANNEL"/>
    <property type="match status" value="1"/>
</dbReference>
<dbReference type="Pfam" id="PF02888">
    <property type="entry name" value="CaMBD"/>
    <property type="match status" value="1"/>
</dbReference>
<dbReference type="Pfam" id="PF07885">
    <property type="entry name" value="Ion_trans_2"/>
    <property type="match status" value="1"/>
</dbReference>
<dbReference type="Pfam" id="PF03530">
    <property type="entry name" value="SK_channel"/>
    <property type="match status" value="1"/>
</dbReference>
<dbReference type="SMART" id="SM01053">
    <property type="entry name" value="CaMBD"/>
    <property type="match status" value="1"/>
</dbReference>
<dbReference type="SUPFAM" id="SSF81327">
    <property type="entry name" value="Small-conductance potassium channel"/>
    <property type="match status" value="1"/>
</dbReference>
<dbReference type="SUPFAM" id="SSF81324">
    <property type="entry name" value="Voltage-gated potassium channels"/>
    <property type="match status" value="1"/>
</dbReference>